<evidence type="ECO:0000250" key="1"/>
<evidence type="ECO:0000250" key="2">
    <source>
        <dbReference type="UniProtKB" id="Q15572"/>
    </source>
</evidence>
<evidence type="ECO:0000256" key="3">
    <source>
        <dbReference type="SAM" id="MobiDB-lite"/>
    </source>
</evidence>
<evidence type="ECO:0000305" key="4"/>
<dbReference type="EMBL" id="Y09974">
    <property type="protein sequence ID" value="CAA71093.1"/>
    <property type="molecule type" value="mRNA"/>
</dbReference>
<dbReference type="EMBL" id="AK087534">
    <property type="protein sequence ID" value="BAC39916.1"/>
    <property type="molecule type" value="mRNA"/>
</dbReference>
<dbReference type="EMBL" id="AK154846">
    <property type="protein sequence ID" value="BAE32872.1"/>
    <property type="molecule type" value="mRNA"/>
</dbReference>
<dbReference type="EMBL" id="BC058383">
    <property type="protein sequence ID" value="AAH58383.1"/>
    <property type="molecule type" value="mRNA"/>
</dbReference>
<dbReference type="CCDS" id="CCDS40493.1"/>
<dbReference type="RefSeq" id="NP_067416.2">
    <property type="nucleotide sequence ID" value="NM_021441.3"/>
</dbReference>
<dbReference type="BioGRID" id="203958">
    <property type="interactions" value="6"/>
</dbReference>
<dbReference type="CORUM" id="Q6PDZ2"/>
<dbReference type="FunCoup" id="Q6PDZ2">
    <property type="interactions" value="2258"/>
</dbReference>
<dbReference type="STRING" id="10090.ENSMUSP00000090789"/>
<dbReference type="GlyGen" id="Q6PDZ2">
    <property type="glycosylation" value="2 sites"/>
</dbReference>
<dbReference type="iPTMnet" id="Q6PDZ2"/>
<dbReference type="PhosphoSitePlus" id="Q6PDZ2"/>
<dbReference type="PaxDb" id="10090-ENSMUSP00000090789"/>
<dbReference type="PeptideAtlas" id="Q6PDZ2"/>
<dbReference type="ProteomicsDB" id="254492"/>
<dbReference type="Antibodypedia" id="17054">
    <property type="antibodies" value="149 antibodies from 26 providers"/>
</dbReference>
<dbReference type="DNASU" id="21341"/>
<dbReference type="Ensembl" id="ENSMUST00000093099.13">
    <property type="protein sequence ID" value="ENSMUSP00000090789.7"/>
    <property type="gene ID" value="ENSMUSG00000031832.16"/>
</dbReference>
<dbReference type="GeneID" id="21341"/>
<dbReference type="KEGG" id="mmu:21341"/>
<dbReference type="UCSC" id="uc009npy.1">
    <property type="organism name" value="mouse"/>
</dbReference>
<dbReference type="AGR" id="MGI:109576"/>
<dbReference type="CTD" id="9013"/>
<dbReference type="MGI" id="MGI:109576">
    <property type="gene designation" value="Taf1c"/>
</dbReference>
<dbReference type="VEuPathDB" id="HostDB:ENSMUSG00000031832"/>
<dbReference type="eggNOG" id="ENOG502QTCT">
    <property type="taxonomic scope" value="Eukaryota"/>
</dbReference>
<dbReference type="GeneTree" id="ENSGT00390000010767"/>
<dbReference type="HOGENOM" id="CLU_360905_0_0_1"/>
<dbReference type="InParanoid" id="Q6PDZ2"/>
<dbReference type="OMA" id="CCRRWLK"/>
<dbReference type="OrthoDB" id="2382881at2759"/>
<dbReference type="PhylomeDB" id="Q6PDZ2"/>
<dbReference type="TreeFam" id="TF351959"/>
<dbReference type="Reactome" id="R-MMU-5250924">
    <property type="pathway name" value="B-WICH complex positively regulates rRNA expression"/>
</dbReference>
<dbReference type="Reactome" id="R-MMU-73762">
    <property type="pathway name" value="RNA Polymerase I Transcription Initiation"/>
</dbReference>
<dbReference type="Reactome" id="R-MMU-73772">
    <property type="pathway name" value="RNA Polymerase I Promoter Escape"/>
</dbReference>
<dbReference type="Reactome" id="R-MMU-73863">
    <property type="pathway name" value="RNA Polymerase I Transcription Termination"/>
</dbReference>
<dbReference type="BioGRID-ORCS" id="21341">
    <property type="hits" value="25 hits in 79 CRISPR screens"/>
</dbReference>
<dbReference type="ChiTaRS" id="Taf1c">
    <property type="organism name" value="mouse"/>
</dbReference>
<dbReference type="PRO" id="PR:Q6PDZ2"/>
<dbReference type="Proteomes" id="UP000000589">
    <property type="component" value="Chromosome 8"/>
</dbReference>
<dbReference type="RNAct" id="Q6PDZ2">
    <property type="molecule type" value="protein"/>
</dbReference>
<dbReference type="Bgee" id="ENSMUSG00000031832">
    <property type="expression patterns" value="Expressed in saccule of membranous labyrinth and 241 other cell types or tissues"/>
</dbReference>
<dbReference type="ExpressionAtlas" id="Q6PDZ2">
    <property type="expression patterns" value="baseline and differential"/>
</dbReference>
<dbReference type="GO" id="GO:0001650">
    <property type="term" value="C:fibrillar center"/>
    <property type="evidence" value="ECO:0007669"/>
    <property type="project" value="Ensembl"/>
</dbReference>
<dbReference type="GO" id="GO:0005654">
    <property type="term" value="C:nucleoplasm"/>
    <property type="evidence" value="ECO:0000304"/>
    <property type="project" value="Reactome"/>
</dbReference>
<dbReference type="GO" id="GO:0000120">
    <property type="term" value="C:RNA polymerase I transcription regulator complex"/>
    <property type="evidence" value="ECO:0000304"/>
    <property type="project" value="MGI"/>
</dbReference>
<dbReference type="GO" id="GO:0005668">
    <property type="term" value="C:RNA polymerase transcription factor SL1 complex"/>
    <property type="evidence" value="ECO:0000353"/>
    <property type="project" value="MGI"/>
</dbReference>
<dbReference type="GO" id="GO:0001164">
    <property type="term" value="F:RNA polymerase I core promoter sequence-specific DNA binding"/>
    <property type="evidence" value="ECO:0007669"/>
    <property type="project" value="Ensembl"/>
</dbReference>
<dbReference type="GO" id="GO:0001181">
    <property type="term" value="F:RNA polymerase I general transcription initiation factor activity"/>
    <property type="evidence" value="ECO:0007669"/>
    <property type="project" value="Ensembl"/>
</dbReference>
<dbReference type="GO" id="GO:0006360">
    <property type="term" value="P:transcription by RNA polymerase I"/>
    <property type="evidence" value="ECO:0000304"/>
    <property type="project" value="MGI"/>
</dbReference>
<dbReference type="Gene3D" id="2.130.10.10">
    <property type="entry name" value="YVTN repeat-like/Quinoprotein amine dehydrogenase"/>
    <property type="match status" value="1"/>
</dbReference>
<dbReference type="InterPro" id="IPR038801">
    <property type="entry name" value="TAF1C"/>
</dbReference>
<dbReference type="InterPro" id="IPR049087">
    <property type="entry name" value="TAF1C_beta-prop"/>
</dbReference>
<dbReference type="InterPro" id="IPR049089">
    <property type="entry name" value="TAF1C_C"/>
</dbReference>
<dbReference type="InterPro" id="IPR049090">
    <property type="entry name" value="TAF1C_HB"/>
</dbReference>
<dbReference type="InterPro" id="IPR015943">
    <property type="entry name" value="WD40/YVTN_repeat-like_dom_sf"/>
</dbReference>
<dbReference type="InterPro" id="IPR036322">
    <property type="entry name" value="WD40_repeat_dom_sf"/>
</dbReference>
<dbReference type="PANTHER" id="PTHR15319">
    <property type="entry name" value="TATA BOX-BINDING PROTEIN ASSOCIATED FACTOR RNA POLYMERASE I SUBUNIT C"/>
    <property type="match status" value="1"/>
</dbReference>
<dbReference type="PANTHER" id="PTHR15319:SF1">
    <property type="entry name" value="TATA BOX-BINDING PROTEIN-ASSOCIATED FACTOR RNA POLYMERASE I SUBUNIT C"/>
    <property type="match status" value="1"/>
</dbReference>
<dbReference type="Pfam" id="PF20641">
    <property type="entry name" value="TAF1C_beta-prop"/>
    <property type="match status" value="1"/>
</dbReference>
<dbReference type="Pfam" id="PF20643">
    <property type="entry name" value="TAF1C_C"/>
    <property type="match status" value="1"/>
</dbReference>
<dbReference type="Pfam" id="PF20642">
    <property type="entry name" value="TAF1C_HB"/>
    <property type="match status" value="1"/>
</dbReference>
<dbReference type="SUPFAM" id="SSF50978">
    <property type="entry name" value="WD40 repeat-like"/>
    <property type="match status" value="1"/>
</dbReference>
<protein>
    <recommendedName>
        <fullName>TATA box-binding protein-associated factor RNA polymerase I subunit C</fullName>
    </recommendedName>
    <alternativeName>
        <fullName>RNA polymerase I-specific TBP-associated factor 95 kDa</fullName>
        <shortName>TAFI95</shortName>
    </alternativeName>
    <alternativeName>
        <fullName>TATA box-binding protein-associated factor 1C</fullName>
        <shortName>TBP-associated factor 1C</shortName>
    </alternativeName>
    <alternativeName>
        <fullName>Transcription initiation factor SL1/TIF-IB subunit C</fullName>
    </alternativeName>
</protein>
<reference key="1">
    <citation type="journal article" date="1997" name="Proc. Natl. Acad. Sci. U.S.A.">
        <title>Cloning of murine RNA polymerase I-specific TAF factors: conserved interactions between the subunits of the species-specific transcription initiation factor TIF-IB/SL1.</title>
        <authorList>
            <person name="Heix J."/>
            <person name="Zomerdijk J.C.B.M."/>
            <person name="Ravanpay A."/>
            <person name="Tjian R."/>
            <person name="Grummt I."/>
        </authorList>
    </citation>
    <scope>NUCLEOTIDE SEQUENCE [MRNA]</scope>
    <scope>INTERACTION WITH TBP; TAF1A AND TAF1B</scope>
</reference>
<reference key="2">
    <citation type="journal article" date="2005" name="Science">
        <title>The transcriptional landscape of the mammalian genome.</title>
        <authorList>
            <person name="Carninci P."/>
            <person name="Kasukawa T."/>
            <person name="Katayama S."/>
            <person name="Gough J."/>
            <person name="Frith M.C."/>
            <person name="Maeda N."/>
            <person name="Oyama R."/>
            <person name="Ravasi T."/>
            <person name="Lenhard B."/>
            <person name="Wells C."/>
            <person name="Kodzius R."/>
            <person name="Shimokawa K."/>
            <person name="Bajic V.B."/>
            <person name="Brenner S.E."/>
            <person name="Batalov S."/>
            <person name="Forrest A.R."/>
            <person name="Zavolan M."/>
            <person name="Davis M.J."/>
            <person name="Wilming L.G."/>
            <person name="Aidinis V."/>
            <person name="Allen J.E."/>
            <person name="Ambesi-Impiombato A."/>
            <person name="Apweiler R."/>
            <person name="Aturaliya R.N."/>
            <person name="Bailey T.L."/>
            <person name="Bansal M."/>
            <person name="Baxter L."/>
            <person name="Beisel K.W."/>
            <person name="Bersano T."/>
            <person name="Bono H."/>
            <person name="Chalk A.M."/>
            <person name="Chiu K.P."/>
            <person name="Choudhary V."/>
            <person name="Christoffels A."/>
            <person name="Clutterbuck D.R."/>
            <person name="Crowe M.L."/>
            <person name="Dalla E."/>
            <person name="Dalrymple B.P."/>
            <person name="de Bono B."/>
            <person name="Della Gatta G."/>
            <person name="di Bernardo D."/>
            <person name="Down T."/>
            <person name="Engstrom P."/>
            <person name="Fagiolini M."/>
            <person name="Faulkner G."/>
            <person name="Fletcher C.F."/>
            <person name="Fukushima T."/>
            <person name="Furuno M."/>
            <person name="Futaki S."/>
            <person name="Gariboldi M."/>
            <person name="Georgii-Hemming P."/>
            <person name="Gingeras T.R."/>
            <person name="Gojobori T."/>
            <person name="Green R.E."/>
            <person name="Gustincich S."/>
            <person name="Harbers M."/>
            <person name="Hayashi Y."/>
            <person name="Hensch T.K."/>
            <person name="Hirokawa N."/>
            <person name="Hill D."/>
            <person name="Huminiecki L."/>
            <person name="Iacono M."/>
            <person name="Ikeo K."/>
            <person name="Iwama A."/>
            <person name="Ishikawa T."/>
            <person name="Jakt M."/>
            <person name="Kanapin A."/>
            <person name="Katoh M."/>
            <person name="Kawasawa Y."/>
            <person name="Kelso J."/>
            <person name="Kitamura H."/>
            <person name="Kitano H."/>
            <person name="Kollias G."/>
            <person name="Krishnan S.P."/>
            <person name="Kruger A."/>
            <person name="Kummerfeld S.K."/>
            <person name="Kurochkin I.V."/>
            <person name="Lareau L.F."/>
            <person name="Lazarevic D."/>
            <person name="Lipovich L."/>
            <person name="Liu J."/>
            <person name="Liuni S."/>
            <person name="McWilliam S."/>
            <person name="Madan Babu M."/>
            <person name="Madera M."/>
            <person name="Marchionni L."/>
            <person name="Matsuda H."/>
            <person name="Matsuzawa S."/>
            <person name="Miki H."/>
            <person name="Mignone F."/>
            <person name="Miyake S."/>
            <person name="Morris K."/>
            <person name="Mottagui-Tabar S."/>
            <person name="Mulder N."/>
            <person name="Nakano N."/>
            <person name="Nakauchi H."/>
            <person name="Ng P."/>
            <person name="Nilsson R."/>
            <person name="Nishiguchi S."/>
            <person name="Nishikawa S."/>
            <person name="Nori F."/>
            <person name="Ohara O."/>
            <person name="Okazaki Y."/>
            <person name="Orlando V."/>
            <person name="Pang K.C."/>
            <person name="Pavan W.J."/>
            <person name="Pavesi G."/>
            <person name="Pesole G."/>
            <person name="Petrovsky N."/>
            <person name="Piazza S."/>
            <person name="Reed J."/>
            <person name="Reid J.F."/>
            <person name="Ring B.Z."/>
            <person name="Ringwald M."/>
            <person name="Rost B."/>
            <person name="Ruan Y."/>
            <person name="Salzberg S.L."/>
            <person name="Sandelin A."/>
            <person name="Schneider C."/>
            <person name="Schoenbach C."/>
            <person name="Sekiguchi K."/>
            <person name="Semple C.A."/>
            <person name="Seno S."/>
            <person name="Sessa L."/>
            <person name="Sheng Y."/>
            <person name="Shibata Y."/>
            <person name="Shimada H."/>
            <person name="Shimada K."/>
            <person name="Silva D."/>
            <person name="Sinclair B."/>
            <person name="Sperling S."/>
            <person name="Stupka E."/>
            <person name="Sugiura K."/>
            <person name="Sultana R."/>
            <person name="Takenaka Y."/>
            <person name="Taki K."/>
            <person name="Tammoja K."/>
            <person name="Tan S.L."/>
            <person name="Tang S."/>
            <person name="Taylor M.S."/>
            <person name="Tegner J."/>
            <person name="Teichmann S.A."/>
            <person name="Ueda H.R."/>
            <person name="van Nimwegen E."/>
            <person name="Verardo R."/>
            <person name="Wei C.L."/>
            <person name="Yagi K."/>
            <person name="Yamanishi H."/>
            <person name="Zabarovsky E."/>
            <person name="Zhu S."/>
            <person name="Zimmer A."/>
            <person name="Hide W."/>
            <person name="Bult C."/>
            <person name="Grimmond S.M."/>
            <person name="Teasdale R.D."/>
            <person name="Liu E.T."/>
            <person name="Brusic V."/>
            <person name="Quackenbush J."/>
            <person name="Wahlestedt C."/>
            <person name="Mattick J.S."/>
            <person name="Hume D.A."/>
            <person name="Kai C."/>
            <person name="Sasaki D."/>
            <person name="Tomaru Y."/>
            <person name="Fukuda S."/>
            <person name="Kanamori-Katayama M."/>
            <person name="Suzuki M."/>
            <person name="Aoki J."/>
            <person name="Arakawa T."/>
            <person name="Iida J."/>
            <person name="Imamura K."/>
            <person name="Itoh M."/>
            <person name="Kato T."/>
            <person name="Kawaji H."/>
            <person name="Kawagashira N."/>
            <person name="Kawashima T."/>
            <person name="Kojima M."/>
            <person name="Kondo S."/>
            <person name="Konno H."/>
            <person name="Nakano K."/>
            <person name="Ninomiya N."/>
            <person name="Nishio T."/>
            <person name="Okada M."/>
            <person name="Plessy C."/>
            <person name="Shibata K."/>
            <person name="Shiraki T."/>
            <person name="Suzuki S."/>
            <person name="Tagami M."/>
            <person name="Waki K."/>
            <person name="Watahiki A."/>
            <person name="Okamura-Oho Y."/>
            <person name="Suzuki H."/>
            <person name="Kawai J."/>
            <person name="Hayashizaki Y."/>
        </authorList>
    </citation>
    <scope>NUCLEOTIDE SEQUENCE [LARGE SCALE MRNA]</scope>
    <source>
        <strain>C57BL/6J</strain>
        <strain>NOD</strain>
        <tissue>Eye</tissue>
    </source>
</reference>
<reference key="3">
    <citation type="journal article" date="2004" name="Genome Res.">
        <title>The status, quality, and expansion of the NIH full-length cDNA project: the Mammalian Gene Collection (MGC).</title>
        <authorList>
            <consortium name="The MGC Project Team"/>
        </authorList>
    </citation>
    <scope>NUCLEOTIDE SEQUENCE [LARGE SCALE MRNA]</scope>
    <source>
        <strain>C57BL/6J</strain>
        <tissue>Brain</tissue>
    </source>
</reference>
<reference key="4">
    <citation type="journal article" date="1998" name="J. Mol. Biol.">
        <title>Mammalian RNA polymerase I exists as a holoenzyme with associated basal transcription factors.</title>
        <authorList>
            <person name="Seither P."/>
            <person name="Iben S."/>
            <person name="Grummt I."/>
        </authorList>
    </citation>
    <scope>SUBCELLULAR LOCATION</scope>
    <scope>IDENTIFICATION IN THE RNA POLYMERASE I HOLOCOMPLEX</scope>
</reference>
<reference key="5">
    <citation type="journal article" date="2002" name="EMBO Rep.">
        <title>Multiple interactions between RNA polymerase I, TIF-IA and TAF(I) subunits regulate preinitiation complex assembly at the ribosomal gene promoter.</title>
        <authorList>
            <person name="Yuan X."/>
            <person name="Zhao J."/>
            <person name="Zentgraf H."/>
            <person name="Hoffmann-Rohrer U."/>
            <person name="Grummt I."/>
        </authorList>
    </citation>
    <scope>INTERACTION WITH RRN3</scope>
</reference>
<accession>Q6PDZ2</accession>
<accession>P97359</accession>
<accession>Q3U3B6</accession>
<accession>Q8BN54</accession>
<keyword id="KW-0238">DNA-binding</keyword>
<keyword id="KW-0539">Nucleus</keyword>
<keyword id="KW-0597">Phosphoprotein</keyword>
<keyword id="KW-1185">Reference proteome</keyword>
<keyword id="KW-0804">Transcription</keyword>
<keyword id="KW-0805">Transcription regulation</keyword>
<proteinExistence type="evidence at protein level"/>
<organism>
    <name type="scientific">Mus musculus</name>
    <name type="common">Mouse</name>
    <dbReference type="NCBI Taxonomy" id="10090"/>
    <lineage>
        <taxon>Eukaryota</taxon>
        <taxon>Metazoa</taxon>
        <taxon>Chordata</taxon>
        <taxon>Craniata</taxon>
        <taxon>Vertebrata</taxon>
        <taxon>Euteleostomi</taxon>
        <taxon>Mammalia</taxon>
        <taxon>Eutheria</taxon>
        <taxon>Euarchontoglires</taxon>
        <taxon>Glires</taxon>
        <taxon>Rodentia</taxon>
        <taxon>Myomorpha</taxon>
        <taxon>Muroidea</taxon>
        <taxon>Muridae</taxon>
        <taxon>Murinae</taxon>
        <taxon>Mus</taxon>
        <taxon>Mus</taxon>
    </lineage>
</organism>
<comment type="function">
    <text evidence="1">Component of the transcription factor SL1/TIF-IB complex, which is involved in the assembly of the PIC (pre-initiation complex) during RNA polymerase I-dependent transcription. The rate of PIC formation probably is primarily dependent on the rate of association of SL1/TIF-IB with the rDNA promoter. SL1/TIF-IB is involved in stabilization of nucleolar transcription factor 1/UBTF on rDNA. Formation of SL1/TIF-IB excludes the association of TBP with TFIID subunits. Recruits RNA polymerase I to the rRNA gene promoter via interaction with RRN3 (By similarity).</text>
</comment>
<comment type="subunit">
    <text evidence="2">Component of the transcription factor SL1/TIF-IB complex, composed of TBP and at least TAF1A, TAF1B, TAF1C and TAF1D. In the complex interacts directly with TBP, TAF1A and TAF1B. Interaction of the SL1/TIF-IB subunits with TBP excludes interaction of TBP with the transcription factor IID (TFIID) subunits. Interacts with MYC and RRN3. Interacts with p53/TP53; the interaction prevents the association of SL1/TIF-IB with UBTF and represses RNA polymerase I transcription. Part of Pol I pre-initiation complex (PIC), in which Pol I core assembles with RRN3 and promoter-bound UTBF and SL1/TIF-IB complex.</text>
</comment>
<comment type="subcellular location">
    <subcellularLocation>
        <location evidence="2">Nucleus</location>
        <location evidence="2">Nucleolus</location>
    </subcellularLocation>
</comment>
<gene>
    <name type="primary">Taf1c</name>
</gene>
<name>TAF1C_MOUSE</name>
<sequence>MDFPGTLRPSLFKAGPLGMTDGPDLSFMCSWRDALTLPGSQPQNCKDPTLSFAKNLLWEPSTPGPLPLLMPPDPDPWDPGVTAQDFLFRGGHCYQYQSQAVLDVTEQLSRFLWDHGDIAFAPLGRLMLENFRLEGNRGYSKKMTIVSAKKLLQDLGGHQPWGCPWASLSRRLRRFSIVGGPVLSRSVSLLMGKLLHEELAMRWEQLLMDEAFTGGALAWLPGRTARAGQLVYPSGGALDKLYFQEVSVTSGGNPRILENPGHVQLRGPVRQVVTSTVQGETLLAVRSDYHCATWKIDKQGPPALLQVMQVEKGATGISLSPHLSGELAICSRSGAVCLWTPQAGLQTIYKDTETLAFRDPSPWRWADFTAHPRVLTVGDRTGVKMVDIQGPPGCGLLLFRAGAEAACQKGERVLLAQYLGQPGQTPPSLHLICTQFSIYLMDERLPLVPMLKWDHGLPSAPLLARLLPPASPGHPRPLLLGGQGGQLQLLHITGEGTSMPQLAGPPQSLPSITESLSAFPLLEPKKQQLLQERLEAPVIGLAAVPLCASAPGLLLFQLSAAGDVFYQHLRLLQASSPRKVPEQATAPSVDQVSTPSWTPQASARCSRWLEDLMELSPTRPLWVAPTFSHRRFLGHMERQKSQETMPQKLRAAMAKGQLLRPGDLSTLPRAEPPPAPQCSQQDELTERLTEAWEGRVTAWWRRHRGETSETQTQSKRPKRRTQLSSTFSSFTSYLDSPDASSAPRSQDLSTSEARLQSPRVPPSQELTQEVWGQGVKRERRQTLRDHTDKLPLKRDTPGPVATPPSQASSLQTMSFRQQTPVHSGSQPPQKKPRMGF</sequence>
<feature type="chain" id="PRO_0000118864" description="TATA box-binding protein-associated factor RNA polymerase I subunit C">
    <location>
        <begin position="1"/>
        <end position="836"/>
    </location>
</feature>
<feature type="region of interest" description="Disordered" evidence="3">
    <location>
        <begin position="662"/>
        <end position="683"/>
    </location>
</feature>
<feature type="region of interest" description="Disordered" evidence="3">
    <location>
        <begin position="703"/>
        <end position="836"/>
    </location>
</feature>
<feature type="compositionally biased region" description="Polar residues" evidence="3">
    <location>
        <begin position="738"/>
        <end position="754"/>
    </location>
</feature>
<feature type="compositionally biased region" description="Basic and acidic residues" evidence="3">
    <location>
        <begin position="780"/>
        <end position="796"/>
    </location>
</feature>
<feature type="compositionally biased region" description="Polar residues" evidence="3">
    <location>
        <begin position="803"/>
        <end position="828"/>
    </location>
</feature>
<feature type="modified residue" description="Phosphothreonine" evidence="2">
    <location>
        <position position="802"/>
    </location>
</feature>
<feature type="sequence conflict" description="In Ref. 2; BAC39916." evidence="4" ref="2">
    <original>R</original>
    <variation>Q</variation>
    <location>
        <position position="89"/>
    </location>
</feature>
<feature type="sequence conflict" description="In Ref. 1; CAA71093." evidence="4" ref="1">
    <original>G</original>
    <variation>A</variation>
    <location>
        <position position="694"/>
    </location>
</feature>